<name>ECFA2_LISMF</name>
<protein>
    <recommendedName>
        <fullName evidence="1">Energy-coupling factor transporter ATP-binding protein EcfA2</fullName>
        <shortName evidence="1">ECF transporter A component EcfA2</shortName>
        <ecNumber evidence="1">7.-.-.-</ecNumber>
    </recommendedName>
</protein>
<sequence length="288" mass="31957">MEIKLEQLGYCYQKNSPFEKRALLDVNVSFDSGSYSAIIGHTGSGKSTLLQHLNALLMPTEGKITVGDREIVAGVKQKKLRDLRKKVGIVFQFPEAQLFEETVEKDICFGPMNFGVSEEDAKLRAKKVIYEVGLTEEILSRSPFELSGGQMRRVAIAGVLAMDPEVLVLDEPTAGLDPHGREEIMEMFYNLHKEKGLTTVLVTHSMEDAARYAEKIVLMKAGTVLQIGTPREVFAKPDELVDLGLSVPDVVRFQGLFERKFDVKLTKTCLTIDELTTEMAPYLAKGGA</sequence>
<reference key="1">
    <citation type="journal article" date="2004" name="Nucleic Acids Res.">
        <title>Whole genome comparisons of serotype 4b and 1/2a strains of the food-borne pathogen Listeria monocytogenes reveal new insights into the core genome components of this species.</title>
        <authorList>
            <person name="Nelson K.E."/>
            <person name="Fouts D.E."/>
            <person name="Mongodin E.F."/>
            <person name="Ravel J."/>
            <person name="DeBoy R.T."/>
            <person name="Kolonay J.F."/>
            <person name="Rasko D.A."/>
            <person name="Angiuoli S.V."/>
            <person name="Gill S.R."/>
            <person name="Paulsen I.T."/>
            <person name="Peterson J.D."/>
            <person name="White O."/>
            <person name="Nelson W.C."/>
            <person name="Nierman W.C."/>
            <person name="Beanan M.J."/>
            <person name="Brinkac L.M."/>
            <person name="Daugherty S.C."/>
            <person name="Dodson R.J."/>
            <person name="Durkin A.S."/>
            <person name="Madupu R."/>
            <person name="Haft D.H."/>
            <person name="Selengut J."/>
            <person name="Van Aken S.E."/>
            <person name="Khouri H.M."/>
            <person name="Fedorova N."/>
            <person name="Forberger H.A."/>
            <person name="Tran B."/>
            <person name="Kathariou S."/>
            <person name="Wonderling L.D."/>
            <person name="Uhlich G.A."/>
            <person name="Bayles D.O."/>
            <person name="Luchansky J.B."/>
            <person name="Fraser C.M."/>
        </authorList>
    </citation>
    <scope>NUCLEOTIDE SEQUENCE [LARGE SCALE GENOMIC DNA]</scope>
    <source>
        <strain>F2365</strain>
    </source>
</reference>
<feature type="chain" id="PRO_0000092028" description="Energy-coupling factor transporter ATP-binding protein EcfA2">
    <location>
        <begin position="1"/>
        <end position="288"/>
    </location>
</feature>
<feature type="domain" description="ABC transporter" evidence="1">
    <location>
        <begin position="3"/>
        <end position="246"/>
    </location>
</feature>
<feature type="binding site" evidence="1">
    <location>
        <begin position="40"/>
        <end position="47"/>
    </location>
    <ligand>
        <name>ATP</name>
        <dbReference type="ChEBI" id="CHEBI:30616"/>
    </ligand>
</feature>
<gene>
    <name evidence="1" type="primary">ecfA2</name>
    <name type="synonym">cbiO2</name>
    <name type="ordered locus">LMOf2365_2573</name>
</gene>
<evidence type="ECO:0000255" key="1">
    <source>
        <dbReference type="HAMAP-Rule" id="MF_01710"/>
    </source>
</evidence>
<dbReference type="EC" id="7.-.-.-" evidence="1"/>
<dbReference type="EMBL" id="AE017262">
    <property type="protein sequence ID" value="AAT05338.1"/>
    <property type="molecule type" value="Genomic_DNA"/>
</dbReference>
<dbReference type="RefSeq" id="WP_003726078.1">
    <property type="nucleotide sequence ID" value="NC_002973.6"/>
</dbReference>
<dbReference type="SMR" id="Q71WH8"/>
<dbReference type="DIP" id="DIP-61614N"/>
<dbReference type="IntAct" id="Q71WH8">
    <property type="interactions" value="1"/>
</dbReference>
<dbReference type="TCDB" id="3.A.1.25.8">
    <property type="family name" value="the atp-binding cassette (abc) superfamily"/>
</dbReference>
<dbReference type="KEGG" id="lmf:LMOf2365_2573"/>
<dbReference type="HOGENOM" id="CLU_000604_1_22_9"/>
<dbReference type="GO" id="GO:0043190">
    <property type="term" value="C:ATP-binding cassette (ABC) transporter complex"/>
    <property type="evidence" value="ECO:0007669"/>
    <property type="project" value="TreeGrafter"/>
</dbReference>
<dbReference type="GO" id="GO:0005524">
    <property type="term" value="F:ATP binding"/>
    <property type="evidence" value="ECO:0007669"/>
    <property type="project" value="UniProtKB-KW"/>
</dbReference>
<dbReference type="GO" id="GO:0016887">
    <property type="term" value="F:ATP hydrolysis activity"/>
    <property type="evidence" value="ECO:0007669"/>
    <property type="project" value="InterPro"/>
</dbReference>
<dbReference type="GO" id="GO:0042626">
    <property type="term" value="F:ATPase-coupled transmembrane transporter activity"/>
    <property type="evidence" value="ECO:0007669"/>
    <property type="project" value="TreeGrafter"/>
</dbReference>
<dbReference type="GO" id="GO:0015087">
    <property type="term" value="F:cobalt ion transmembrane transporter activity"/>
    <property type="evidence" value="ECO:0000304"/>
    <property type="project" value="JCVI"/>
</dbReference>
<dbReference type="GO" id="GO:0006824">
    <property type="term" value="P:cobalt ion transport"/>
    <property type="evidence" value="ECO:0000304"/>
    <property type="project" value="JCVI"/>
</dbReference>
<dbReference type="CDD" id="cd03225">
    <property type="entry name" value="ABC_cobalt_CbiO_domain1"/>
    <property type="match status" value="1"/>
</dbReference>
<dbReference type="FunFam" id="3.40.50.300:FF:000224">
    <property type="entry name" value="Energy-coupling factor transporter ATP-binding protein EcfA"/>
    <property type="match status" value="1"/>
</dbReference>
<dbReference type="Gene3D" id="3.40.50.300">
    <property type="entry name" value="P-loop containing nucleotide triphosphate hydrolases"/>
    <property type="match status" value="1"/>
</dbReference>
<dbReference type="InterPro" id="IPR003593">
    <property type="entry name" value="AAA+_ATPase"/>
</dbReference>
<dbReference type="InterPro" id="IPR003439">
    <property type="entry name" value="ABC_transporter-like_ATP-bd"/>
</dbReference>
<dbReference type="InterPro" id="IPR017871">
    <property type="entry name" value="ABC_transporter-like_CS"/>
</dbReference>
<dbReference type="InterPro" id="IPR015856">
    <property type="entry name" value="ABC_transpr_CbiO/EcfA_su"/>
</dbReference>
<dbReference type="InterPro" id="IPR050095">
    <property type="entry name" value="ECF_ABC_transporter_ATP-bd"/>
</dbReference>
<dbReference type="InterPro" id="IPR030946">
    <property type="entry name" value="EcfA2"/>
</dbReference>
<dbReference type="InterPro" id="IPR027417">
    <property type="entry name" value="P-loop_NTPase"/>
</dbReference>
<dbReference type="NCBIfam" id="TIGR04521">
    <property type="entry name" value="ECF_ATPase_2"/>
    <property type="match status" value="1"/>
</dbReference>
<dbReference type="NCBIfam" id="NF010155">
    <property type="entry name" value="PRK13634.1"/>
    <property type="match status" value="1"/>
</dbReference>
<dbReference type="PANTHER" id="PTHR43553:SF27">
    <property type="entry name" value="ENERGY-COUPLING FACTOR TRANSPORTER ATP-BINDING PROTEIN ECFA2"/>
    <property type="match status" value="1"/>
</dbReference>
<dbReference type="PANTHER" id="PTHR43553">
    <property type="entry name" value="HEAVY METAL TRANSPORTER"/>
    <property type="match status" value="1"/>
</dbReference>
<dbReference type="Pfam" id="PF00005">
    <property type="entry name" value="ABC_tran"/>
    <property type="match status" value="1"/>
</dbReference>
<dbReference type="SMART" id="SM00382">
    <property type="entry name" value="AAA"/>
    <property type="match status" value="1"/>
</dbReference>
<dbReference type="SUPFAM" id="SSF52540">
    <property type="entry name" value="P-loop containing nucleoside triphosphate hydrolases"/>
    <property type="match status" value="1"/>
</dbReference>
<dbReference type="PROSITE" id="PS00211">
    <property type="entry name" value="ABC_TRANSPORTER_1"/>
    <property type="match status" value="1"/>
</dbReference>
<dbReference type="PROSITE" id="PS50893">
    <property type="entry name" value="ABC_TRANSPORTER_2"/>
    <property type="match status" value="1"/>
</dbReference>
<dbReference type="PROSITE" id="PS51246">
    <property type="entry name" value="CBIO"/>
    <property type="match status" value="1"/>
</dbReference>
<proteinExistence type="inferred from homology"/>
<comment type="function">
    <text evidence="1">ATP-binding (A) component of a common energy-coupling factor (ECF) ABC-transporter complex. Unlike classic ABC transporters this ECF transporter provides the energy necessary to transport a number of different substrates.</text>
</comment>
<comment type="subunit">
    <text evidence="1">Forms a stable energy-coupling factor (ECF) transporter complex composed of 2 membrane-embedded substrate-binding proteins (S component), 2 ATP-binding proteins (A component) and 2 transmembrane proteins (T component).</text>
</comment>
<comment type="subcellular location">
    <subcellularLocation>
        <location evidence="1">Cell membrane</location>
        <topology evidence="1">Peripheral membrane protein</topology>
    </subcellularLocation>
</comment>
<comment type="similarity">
    <text evidence="1">Belongs to the ABC transporter superfamily. Energy-coupling factor EcfA family.</text>
</comment>
<keyword id="KW-0067">ATP-binding</keyword>
<keyword id="KW-1003">Cell membrane</keyword>
<keyword id="KW-0472">Membrane</keyword>
<keyword id="KW-0547">Nucleotide-binding</keyword>
<keyword id="KW-1278">Translocase</keyword>
<keyword id="KW-0813">Transport</keyword>
<accession>Q71WH8</accession>
<organism>
    <name type="scientific">Listeria monocytogenes serotype 4b (strain F2365)</name>
    <dbReference type="NCBI Taxonomy" id="265669"/>
    <lineage>
        <taxon>Bacteria</taxon>
        <taxon>Bacillati</taxon>
        <taxon>Bacillota</taxon>
        <taxon>Bacilli</taxon>
        <taxon>Bacillales</taxon>
        <taxon>Listeriaceae</taxon>
        <taxon>Listeria</taxon>
    </lineage>
</organism>